<name>CAS6_ECOUT</name>
<proteinExistence type="evidence at protein level"/>
<organism>
    <name type="scientific">Escherichia coli (strain UTI89 / UPEC)</name>
    <dbReference type="NCBI Taxonomy" id="364106"/>
    <lineage>
        <taxon>Bacteria</taxon>
        <taxon>Pseudomonadati</taxon>
        <taxon>Pseudomonadota</taxon>
        <taxon>Gammaproteobacteria</taxon>
        <taxon>Enterobacterales</taxon>
        <taxon>Enterobacteriaceae</taxon>
        <taxon>Escherichia</taxon>
    </lineage>
</organism>
<reference key="1">
    <citation type="journal article" date="2006" name="Proc. Natl. Acad. Sci. U.S.A.">
        <title>Identification of genes subject to positive selection in uropathogenic strains of Escherichia coli: a comparative genomics approach.</title>
        <authorList>
            <person name="Chen S.L."/>
            <person name="Hung C.-S."/>
            <person name="Xu J."/>
            <person name="Reigstad C.S."/>
            <person name="Magrini V."/>
            <person name="Sabo A."/>
            <person name="Blasiar D."/>
            <person name="Bieri T."/>
            <person name="Meyer R.R."/>
            <person name="Ozersky P."/>
            <person name="Armstrong J.R."/>
            <person name="Fulton R.S."/>
            <person name="Latreille J.P."/>
            <person name="Spieth J."/>
            <person name="Hooton T.M."/>
            <person name="Mardis E.R."/>
            <person name="Hultgren S.J."/>
            <person name="Gordon J.I."/>
        </authorList>
    </citation>
    <scope>NUCLEOTIDE SEQUENCE [LARGE SCALE GENOMIC DNA]</scope>
    <source>
        <strain>UTI89 / UPEC</strain>
    </source>
</reference>
<reference key="2">
    <citation type="journal article" date="2011" name="J. Bacteriol.">
        <title>Non-identity-mediated CRISPR-bacteriophage interaction mediated via the Csy and Cas3 proteins.</title>
        <authorList>
            <person name="Cady K.C."/>
            <person name="O'Toole G.A."/>
        </authorList>
    </citation>
    <scope>FUNCTION IN CRRNA FORMATION</scope>
    <scope>FUNCTION IN INHIBITION OF BIOFILM FORMATION</scope>
    <scope>MUTAGENESIS OF HIS-29</scope>
    <source>
        <strain>UTI89 / UPEC</strain>
    </source>
</reference>
<protein>
    <recommendedName>
        <fullName>CRISPR-associated endonuclease Cas6/Csy4</fullName>
        <ecNumber>3.1.-.-</ecNumber>
    </recommendedName>
    <alternativeName>
        <fullName>crRNA endonuclease</fullName>
    </alternativeName>
</protein>
<dbReference type="EC" id="3.1.-.-"/>
<dbReference type="EMBL" id="CP000243">
    <property type="protein sequence ID" value="ABE06382.1"/>
    <property type="molecule type" value="Genomic_DNA"/>
</dbReference>
<dbReference type="RefSeq" id="WP_000350182.1">
    <property type="nucleotide sequence ID" value="NZ_CP064825.1"/>
</dbReference>
<dbReference type="SMR" id="Q1RE32"/>
<dbReference type="KEGG" id="eci:UTI89_C0896"/>
<dbReference type="HOGENOM" id="CLU_108958_0_0_6"/>
<dbReference type="Proteomes" id="UP000001952">
    <property type="component" value="Chromosome"/>
</dbReference>
<dbReference type="GO" id="GO:0004519">
    <property type="term" value="F:endonuclease activity"/>
    <property type="evidence" value="ECO:0007669"/>
    <property type="project" value="UniProtKB-KW"/>
</dbReference>
<dbReference type="GO" id="GO:0003723">
    <property type="term" value="F:RNA binding"/>
    <property type="evidence" value="ECO:0007669"/>
    <property type="project" value="UniProtKB-KW"/>
</dbReference>
<dbReference type="GO" id="GO:0051607">
    <property type="term" value="P:defense response to virus"/>
    <property type="evidence" value="ECO:0007669"/>
    <property type="project" value="UniProtKB-KW"/>
</dbReference>
<dbReference type="GO" id="GO:0043571">
    <property type="term" value="P:maintenance of CRISPR repeat elements"/>
    <property type="evidence" value="ECO:0007669"/>
    <property type="project" value="InterPro"/>
</dbReference>
<dbReference type="CDD" id="cd09739">
    <property type="entry name" value="Cas6_I-F"/>
    <property type="match status" value="1"/>
</dbReference>
<dbReference type="Gene3D" id="3.30.70.2540">
    <property type="entry name" value="CRISPR-associated endoribonuclease Cas6/Csy4"/>
    <property type="match status" value="1"/>
</dbReference>
<dbReference type="InterPro" id="IPR013396">
    <property type="entry name" value="CRISPR-assoc_prot_Csy4"/>
</dbReference>
<dbReference type="InterPro" id="IPR042564">
    <property type="entry name" value="CRISPR-Cas6/Csy4_sf"/>
</dbReference>
<dbReference type="NCBIfam" id="TIGR02563">
    <property type="entry name" value="cas_Csy4"/>
    <property type="match status" value="1"/>
</dbReference>
<dbReference type="Pfam" id="PF09618">
    <property type="entry name" value="Cas_Csy4"/>
    <property type="match status" value="1"/>
</dbReference>
<evidence type="ECO:0000250" key="1"/>
<evidence type="ECO:0000269" key="2">
    <source>
    </source>
</evidence>
<evidence type="ECO:0000305" key="3"/>
<keyword id="KW-0051">Antiviral defense</keyword>
<keyword id="KW-0255">Endonuclease</keyword>
<keyword id="KW-0378">Hydrolase</keyword>
<keyword id="KW-0540">Nuclease</keyword>
<keyword id="KW-0694">RNA-binding</keyword>
<comment type="function">
    <text evidence="1">CRISPR (clustered regularly interspaced short palindromic repeat) is an adaptive immune system that provides protection against mobile genetic elements (viruses, transposable elements and conjugative plasmids). CRISPR clusters contain sequences complementary to antecedent mobile elements and target invading nucleic acids. CRISPR clusters are transcribed and processed into CRISPR RNA (crRNA). Processes pre-crRNA into individual crRNA units (By similarity).</text>
</comment>
<comment type="function">
    <text evidence="2">Complements a csy4 disruption in Pseudomonas aeruginosa PA14, restoring inhibition of biofilm formation and generation of crRNA.</text>
</comment>
<comment type="similarity">
    <text evidence="3">Belongs to the CRISPR-associated endoribonuclease Cas6 family. Cas6f/Csy4, subtype I-F/Ypest subfamily.</text>
</comment>
<feature type="chain" id="PRO_0000417881" description="CRISPR-associated endonuclease Cas6/Csy4">
    <location>
        <begin position="1"/>
        <end position="184"/>
    </location>
</feature>
<feature type="mutagenesis site" description="Does not complement Pseudomonas aeruginosa csy4 deletion, no production of crRNA." evidence="2">
    <original>H</original>
    <variation>A</variation>
    <location>
        <position position="29"/>
    </location>
</feature>
<gene>
    <name type="primary">cas6f</name>
    <name type="synonym">csy4</name>
    <name type="ordered locus">UTI89_C0896</name>
</gene>
<accession>Q1RE32</accession>
<sequence>MDHYLEIRVLPDPEFSSEMLMAALFAKLHRVLGARGQGDIGVSFPDVNVMPGARLRLHGSAQALQALEASTWRKGLTDYCQCSPVTPVPEIKGWRVVSRVQVKSNPQRLLRRSVKKGWLTEEQAIERLATQAEQRTDLPFLNMKSLSSQQLFKLFIRHGDLLKEPVKGEFSSYGLSATATIPWF</sequence>